<organism>
    <name type="scientific">Campylobacter jejuni (strain RM1221)</name>
    <dbReference type="NCBI Taxonomy" id="195099"/>
    <lineage>
        <taxon>Bacteria</taxon>
        <taxon>Pseudomonadati</taxon>
        <taxon>Campylobacterota</taxon>
        <taxon>Epsilonproteobacteria</taxon>
        <taxon>Campylobacterales</taxon>
        <taxon>Campylobacteraceae</taxon>
        <taxon>Campylobacter</taxon>
    </lineage>
</organism>
<dbReference type="EMBL" id="CP000025">
    <property type="protein sequence ID" value="AAW35186.1"/>
    <property type="molecule type" value="Genomic_DNA"/>
</dbReference>
<dbReference type="RefSeq" id="WP_002867979.1">
    <property type="nucleotide sequence ID" value="NC_003912.7"/>
</dbReference>
<dbReference type="SMR" id="Q5HV34"/>
<dbReference type="KEGG" id="cjr:CJE0849"/>
<dbReference type="HOGENOM" id="CLU_057217_6_3_7"/>
<dbReference type="GO" id="GO:0005829">
    <property type="term" value="C:cytosol"/>
    <property type="evidence" value="ECO:0007669"/>
    <property type="project" value="TreeGrafter"/>
</dbReference>
<dbReference type="GO" id="GO:0000774">
    <property type="term" value="F:adenyl-nucleotide exchange factor activity"/>
    <property type="evidence" value="ECO:0007669"/>
    <property type="project" value="InterPro"/>
</dbReference>
<dbReference type="GO" id="GO:0042803">
    <property type="term" value="F:protein homodimerization activity"/>
    <property type="evidence" value="ECO:0007669"/>
    <property type="project" value="InterPro"/>
</dbReference>
<dbReference type="GO" id="GO:0051087">
    <property type="term" value="F:protein-folding chaperone binding"/>
    <property type="evidence" value="ECO:0007669"/>
    <property type="project" value="InterPro"/>
</dbReference>
<dbReference type="GO" id="GO:0051082">
    <property type="term" value="F:unfolded protein binding"/>
    <property type="evidence" value="ECO:0007669"/>
    <property type="project" value="TreeGrafter"/>
</dbReference>
<dbReference type="GO" id="GO:0006457">
    <property type="term" value="P:protein folding"/>
    <property type="evidence" value="ECO:0007669"/>
    <property type="project" value="InterPro"/>
</dbReference>
<dbReference type="CDD" id="cd00446">
    <property type="entry name" value="GrpE"/>
    <property type="match status" value="1"/>
</dbReference>
<dbReference type="FunFam" id="2.30.22.10:FF:000001">
    <property type="entry name" value="Protein GrpE"/>
    <property type="match status" value="1"/>
</dbReference>
<dbReference type="Gene3D" id="3.90.20.20">
    <property type="match status" value="1"/>
</dbReference>
<dbReference type="Gene3D" id="2.30.22.10">
    <property type="entry name" value="Head domain of nucleotide exchange factor GrpE"/>
    <property type="match status" value="1"/>
</dbReference>
<dbReference type="HAMAP" id="MF_01151">
    <property type="entry name" value="GrpE"/>
    <property type="match status" value="1"/>
</dbReference>
<dbReference type="InterPro" id="IPR000740">
    <property type="entry name" value="GrpE"/>
</dbReference>
<dbReference type="InterPro" id="IPR013805">
    <property type="entry name" value="GrpE_coiled_coil"/>
</dbReference>
<dbReference type="InterPro" id="IPR009012">
    <property type="entry name" value="GrpE_head"/>
</dbReference>
<dbReference type="NCBIfam" id="NF010738">
    <property type="entry name" value="PRK14140.1"/>
    <property type="match status" value="1"/>
</dbReference>
<dbReference type="NCBIfam" id="NF010756">
    <property type="entry name" value="PRK14159.1"/>
    <property type="match status" value="1"/>
</dbReference>
<dbReference type="PANTHER" id="PTHR21237">
    <property type="entry name" value="GRPE PROTEIN"/>
    <property type="match status" value="1"/>
</dbReference>
<dbReference type="PANTHER" id="PTHR21237:SF23">
    <property type="entry name" value="GRPE PROTEIN HOMOLOG, MITOCHONDRIAL"/>
    <property type="match status" value="1"/>
</dbReference>
<dbReference type="Pfam" id="PF01025">
    <property type="entry name" value="GrpE"/>
    <property type="match status" value="1"/>
</dbReference>
<dbReference type="PRINTS" id="PR00773">
    <property type="entry name" value="GRPEPROTEIN"/>
</dbReference>
<dbReference type="SUPFAM" id="SSF58014">
    <property type="entry name" value="Coiled-coil domain of nucleotide exchange factor GrpE"/>
    <property type="match status" value="1"/>
</dbReference>
<dbReference type="SUPFAM" id="SSF51064">
    <property type="entry name" value="Head domain of nucleotide exchange factor GrpE"/>
    <property type="match status" value="1"/>
</dbReference>
<dbReference type="PROSITE" id="PS01071">
    <property type="entry name" value="GRPE"/>
    <property type="match status" value="1"/>
</dbReference>
<gene>
    <name evidence="1" type="primary">grpE</name>
    <name type="ordered locus">CJE0849</name>
</gene>
<accession>Q5HV34</accession>
<feature type="chain" id="PRO_1000053566" description="Protein GrpE">
    <location>
        <begin position="1"/>
        <end position="175"/>
    </location>
</feature>
<feature type="region of interest" description="Disordered" evidence="2">
    <location>
        <begin position="1"/>
        <end position="35"/>
    </location>
</feature>
<feature type="compositionally biased region" description="Basic and acidic residues" evidence="2">
    <location>
        <begin position="25"/>
        <end position="35"/>
    </location>
</feature>
<sequence length="175" mass="20164">MSEQKQEIENENAQNSENLQDDLQDNEKNETNELQKELEELKDKYMRANAEFENIKKRMEKEKLSAMAYANESFAKDLLDVLDALEAAVNVECQDEISLKIKEGVQNTLDLFLKKLEKHGVALIKDEKEFDPNLHEAMFHVDSENHQSGEVVQVLQKGYKIADRVIRPTKVSVAK</sequence>
<comment type="function">
    <text evidence="1">Participates actively in the response to hyperosmotic and heat shock by preventing the aggregation of stress-denatured proteins, in association with DnaK and GrpE. It is the nucleotide exchange factor for DnaK and may function as a thermosensor. Unfolded proteins bind initially to DnaJ; upon interaction with the DnaJ-bound protein, DnaK hydrolyzes its bound ATP, resulting in the formation of a stable complex. GrpE releases ADP from DnaK; ATP binding to DnaK triggers the release of the substrate protein, thus completing the reaction cycle. Several rounds of ATP-dependent interactions between DnaJ, DnaK and GrpE are required for fully efficient folding.</text>
</comment>
<comment type="subunit">
    <text evidence="1">Homodimer.</text>
</comment>
<comment type="subcellular location">
    <subcellularLocation>
        <location evidence="1">Cytoplasm</location>
    </subcellularLocation>
</comment>
<comment type="similarity">
    <text evidence="1">Belongs to the GrpE family.</text>
</comment>
<name>GRPE_CAMJR</name>
<reference key="1">
    <citation type="journal article" date="2005" name="PLoS Biol.">
        <title>Major structural differences and novel potential virulence mechanisms from the genomes of multiple Campylobacter species.</title>
        <authorList>
            <person name="Fouts D.E."/>
            <person name="Mongodin E.F."/>
            <person name="Mandrell R.E."/>
            <person name="Miller W.G."/>
            <person name="Rasko D.A."/>
            <person name="Ravel J."/>
            <person name="Brinkac L.M."/>
            <person name="DeBoy R.T."/>
            <person name="Parker C.T."/>
            <person name="Daugherty S.C."/>
            <person name="Dodson R.J."/>
            <person name="Durkin A.S."/>
            <person name="Madupu R."/>
            <person name="Sullivan S.A."/>
            <person name="Shetty J.U."/>
            <person name="Ayodeji M.A."/>
            <person name="Shvartsbeyn A."/>
            <person name="Schatz M.C."/>
            <person name="Badger J.H."/>
            <person name="Fraser C.M."/>
            <person name="Nelson K.E."/>
        </authorList>
    </citation>
    <scope>NUCLEOTIDE SEQUENCE [LARGE SCALE GENOMIC DNA]</scope>
    <source>
        <strain>RM1221</strain>
    </source>
</reference>
<proteinExistence type="inferred from homology"/>
<protein>
    <recommendedName>
        <fullName evidence="1">Protein GrpE</fullName>
    </recommendedName>
    <alternativeName>
        <fullName evidence="1">HSP-70 cofactor</fullName>
    </alternativeName>
</protein>
<evidence type="ECO:0000255" key="1">
    <source>
        <dbReference type="HAMAP-Rule" id="MF_01151"/>
    </source>
</evidence>
<evidence type="ECO:0000256" key="2">
    <source>
        <dbReference type="SAM" id="MobiDB-lite"/>
    </source>
</evidence>
<keyword id="KW-0143">Chaperone</keyword>
<keyword id="KW-0963">Cytoplasm</keyword>
<keyword id="KW-0346">Stress response</keyword>